<evidence type="ECO:0000250" key="1"/>
<evidence type="ECO:0000305" key="2"/>
<name>DCEB_SHIFL</name>
<keyword id="KW-0007">Acetylation</keyword>
<keyword id="KW-0210">Decarboxylase</keyword>
<keyword id="KW-0456">Lyase</keyword>
<keyword id="KW-0663">Pyridoxal phosphate</keyword>
<keyword id="KW-1185">Reference proteome</keyword>
<gene>
    <name type="primary">gadB</name>
    <name type="ordered locus">SF1734</name>
    <name type="ordered locus">S1867</name>
</gene>
<organism>
    <name type="scientific">Shigella flexneri</name>
    <dbReference type="NCBI Taxonomy" id="623"/>
    <lineage>
        <taxon>Bacteria</taxon>
        <taxon>Pseudomonadati</taxon>
        <taxon>Pseudomonadota</taxon>
        <taxon>Gammaproteobacteria</taxon>
        <taxon>Enterobacterales</taxon>
        <taxon>Enterobacteriaceae</taxon>
        <taxon>Shigella</taxon>
    </lineage>
</organism>
<proteinExistence type="inferred from homology"/>
<accession>P69912</accession>
<accession>P28302</accession>
<accession>P76873</accession>
<feature type="chain" id="PRO_0000146985" description="Glutamate decarboxylase beta">
    <location>
        <begin position="1"/>
        <end position="466"/>
    </location>
</feature>
<feature type="binding site" evidence="1">
    <location>
        <position position="62"/>
    </location>
    <ligand>
        <name>substrate</name>
    </ligand>
</feature>
<feature type="binding site" evidence="1">
    <location>
        <position position="83"/>
    </location>
    <ligand>
        <name>substrate</name>
    </ligand>
</feature>
<feature type="binding site" evidence="1">
    <location>
        <begin position="126"/>
        <end position="127"/>
    </location>
    <ligand>
        <name>pyridoxal 5'-phosphate</name>
        <dbReference type="ChEBI" id="CHEBI:597326"/>
    </ligand>
</feature>
<feature type="binding site" evidence="1">
    <location>
        <position position="212"/>
    </location>
    <ligand>
        <name>pyridoxal 5'-phosphate</name>
        <dbReference type="ChEBI" id="CHEBI:597326"/>
    </ligand>
</feature>
<feature type="binding site" evidence="1">
    <location>
        <position position="275"/>
    </location>
    <ligand>
        <name>pyridoxal 5'-phosphate</name>
        <dbReference type="ChEBI" id="CHEBI:597326"/>
    </ligand>
</feature>
<feature type="modified residue" description="N6-(pyridoxal phosphate)lysine" evidence="1">
    <location>
        <position position="276"/>
    </location>
</feature>
<feature type="modified residue" description="N6-acetyllysine" evidence="1">
    <location>
        <position position="446"/>
    </location>
</feature>
<feature type="modified residue" description="N6-acetyllysine" evidence="1">
    <location>
        <position position="453"/>
    </location>
</feature>
<feature type="modified residue" description="N6-acetyllysine" evidence="1">
    <location>
        <position position="464"/>
    </location>
</feature>
<reference key="1">
    <citation type="journal article" date="2002" name="Nucleic Acids Res.">
        <title>Genome sequence of Shigella flexneri 2a: insights into pathogenicity through comparison with genomes of Escherichia coli K12 and O157.</title>
        <authorList>
            <person name="Jin Q."/>
            <person name="Yuan Z."/>
            <person name="Xu J."/>
            <person name="Wang Y."/>
            <person name="Shen Y."/>
            <person name="Lu W."/>
            <person name="Wang J."/>
            <person name="Liu H."/>
            <person name="Yang J."/>
            <person name="Yang F."/>
            <person name="Zhang X."/>
            <person name="Zhang J."/>
            <person name="Yang G."/>
            <person name="Wu H."/>
            <person name="Qu D."/>
            <person name="Dong J."/>
            <person name="Sun L."/>
            <person name="Xue Y."/>
            <person name="Zhao A."/>
            <person name="Gao Y."/>
            <person name="Zhu J."/>
            <person name="Kan B."/>
            <person name="Ding K."/>
            <person name="Chen S."/>
            <person name="Cheng H."/>
            <person name="Yao Z."/>
            <person name="He B."/>
            <person name="Chen R."/>
            <person name="Ma D."/>
            <person name="Qiang B."/>
            <person name="Wen Y."/>
            <person name="Hou Y."/>
            <person name="Yu J."/>
        </authorList>
    </citation>
    <scope>NUCLEOTIDE SEQUENCE [LARGE SCALE GENOMIC DNA]</scope>
    <source>
        <strain>301 / Serotype 2a</strain>
    </source>
</reference>
<reference key="2">
    <citation type="journal article" date="2003" name="Infect. Immun.">
        <title>Complete genome sequence and comparative genomics of Shigella flexneri serotype 2a strain 2457T.</title>
        <authorList>
            <person name="Wei J."/>
            <person name="Goldberg M.B."/>
            <person name="Burland V."/>
            <person name="Venkatesan M.M."/>
            <person name="Deng W."/>
            <person name="Fournier G."/>
            <person name="Mayhew G.F."/>
            <person name="Plunkett G. III"/>
            <person name="Rose D.J."/>
            <person name="Darling A."/>
            <person name="Mau B."/>
            <person name="Perna N.T."/>
            <person name="Payne S.M."/>
            <person name="Runyen-Janecky L.J."/>
            <person name="Zhou S."/>
            <person name="Schwartz D.C."/>
            <person name="Blattner F.R."/>
        </authorList>
    </citation>
    <scope>NUCLEOTIDE SEQUENCE [LARGE SCALE GENOMIC DNA]</scope>
    <source>
        <strain>ATCC 700930 / 2457T / Serotype 2a</strain>
    </source>
</reference>
<sequence>MDKKQVTDLRSELLDSRFGAKSISTIAESKRFPLHEMRDDVAFQIINDELYLDGNARQNLATFCQTWDDENVHKLMDLSINKNWIDKEEYPQSAAIDLRCVNMVADLWHAPAPKNGQAVGTNTIGSSEACMLGGMAMKWRWRKRMEAAGKPTDKPNLVCGPVQICWHKFARYWDVELREIPMRPGQLFMDPKRMIEACDENTIGVVPTFGVTYTGNYEFPQPLHDALDKFQADTGIDIDMHIDAASGGFLAPFVAPDIVWDFRLPRVKSISASGHKFGLAPLGCGWVIWRDEEALPQELVFNVDYLGGQIGTFAINFSRPAGQVIAQYYEFLRLGREGYTKVQNASYQVAAYLADEIAKLGPYEFICTGRPDEGIPAVCFKLKDGEDPGYTLYDLSERLRLRGWQVPAFTLGGEATDIVVMRIMCRRGFEMDFAELLLEDYKASLKYLSDHPKLQGIAQQNSFKHT</sequence>
<comment type="function">
    <text evidence="1">Converts glutamate to gamma-aminobutyrate (GABA), consuming one intracellular proton in the reaction. The gad system helps to maintain a near-neutral intracellular pH when cells are exposed to extremely acidic conditions. The ability to survive transit through the acidic conditions of the stomach is essential for successful colonization of the mammalian host by commensal and pathogenic bacteria (By similarity).</text>
</comment>
<comment type="catalytic activity">
    <reaction>
        <text>L-glutamate + H(+) = 4-aminobutanoate + CO2</text>
        <dbReference type="Rhea" id="RHEA:17785"/>
        <dbReference type="ChEBI" id="CHEBI:15378"/>
        <dbReference type="ChEBI" id="CHEBI:16526"/>
        <dbReference type="ChEBI" id="CHEBI:29985"/>
        <dbReference type="ChEBI" id="CHEBI:59888"/>
        <dbReference type="EC" id="4.1.1.15"/>
    </reaction>
</comment>
<comment type="cofactor">
    <cofactor evidence="1">
        <name>pyridoxal 5'-phosphate</name>
        <dbReference type="ChEBI" id="CHEBI:597326"/>
    </cofactor>
</comment>
<comment type="subunit">
    <text evidence="1">Homohexamer composed of three dimers.</text>
</comment>
<comment type="induction">
    <text evidence="1">By acidic conditions. Expression is regulated by a complex system involving RpoS, cAMP, CRP, EvgAS, H-NS, GadE, GadW and GadX. The level of involvement for each regulator varies depending upon the growth phase and the medium (By similarity).</text>
</comment>
<comment type="similarity">
    <text evidence="2">Belongs to the group II decarboxylase family.</text>
</comment>
<protein>
    <recommendedName>
        <fullName>Glutamate decarboxylase beta</fullName>
        <shortName>GAD-beta</shortName>
        <ecNumber>4.1.1.15</ecNumber>
    </recommendedName>
</protein>
<dbReference type="EC" id="4.1.1.15"/>
<dbReference type="EMBL" id="AE005674">
    <property type="protein sequence ID" value="AAN43309.2"/>
    <property type="molecule type" value="Genomic_DNA"/>
</dbReference>
<dbReference type="EMBL" id="AE014073">
    <property type="protein sequence ID" value="AAP17196.1"/>
    <property type="molecule type" value="Genomic_DNA"/>
</dbReference>
<dbReference type="RefSeq" id="NP_707602.2">
    <property type="nucleotide sequence ID" value="NC_004337.2"/>
</dbReference>
<dbReference type="RefSeq" id="WP_000358930.1">
    <property type="nucleotide sequence ID" value="NZ_WHSI01000051.1"/>
</dbReference>
<dbReference type="SMR" id="P69912"/>
<dbReference type="STRING" id="198214.SF1734"/>
<dbReference type="PaxDb" id="198214-SF1734"/>
<dbReference type="GeneID" id="1024938"/>
<dbReference type="KEGG" id="sfl:SF1734"/>
<dbReference type="KEGG" id="sfx:S1867"/>
<dbReference type="PATRIC" id="fig|198214.7.peg.2054"/>
<dbReference type="HOGENOM" id="CLU_019582_0_0_6"/>
<dbReference type="Proteomes" id="UP000001006">
    <property type="component" value="Chromosome"/>
</dbReference>
<dbReference type="Proteomes" id="UP000002673">
    <property type="component" value="Chromosome"/>
</dbReference>
<dbReference type="GO" id="GO:0005829">
    <property type="term" value="C:cytosol"/>
    <property type="evidence" value="ECO:0007669"/>
    <property type="project" value="TreeGrafter"/>
</dbReference>
<dbReference type="GO" id="GO:0004351">
    <property type="term" value="F:glutamate decarboxylase activity"/>
    <property type="evidence" value="ECO:0007669"/>
    <property type="project" value="UniProtKB-EC"/>
</dbReference>
<dbReference type="GO" id="GO:0030170">
    <property type="term" value="F:pyridoxal phosphate binding"/>
    <property type="evidence" value="ECO:0007669"/>
    <property type="project" value="InterPro"/>
</dbReference>
<dbReference type="GO" id="GO:0006538">
    <property type="term" value="P:glutamate catabolic process"/>
    <property type="evidence" value="ECO:0007669"/>
    <property type="project" value="TreeGrafter"/>
</dbReference>
<dbReference type="CDD" id="cd06450">
    <property type="entry name" value="DOPA_deC_like"/>
    <property type="match status" value="1"/>
</dbReference>
<dbReference type="FunFam" id="3.40.640.10:FF:000017">
    <property type="entry name" value="Glutamate decarboxylase"/>
    <property type="match status" value="1"/>
</dbReference>
<dbReference type="FunFam" id="3.90.1150.160:FF:000002">
    <property type="entry name" value="Glutamate decarboxylase"/>
    <property type="match status" value="1"/>
</dbReference>
<dbReference type="FunFam" id="4.10.280.50:FF:000001">
    <property type="entry name" value="Glutamate decarboxylase"/>
    <property type="match status" value="1"/>
</dbReference>
<dbReference type="Gene3D" id="3.90.1150.160">
    <property type="match status" value="1"/>
</dbReference>
<dbReference type="Gene3D" id="4.10.280.50">
    <property type="match status" value="1"/>
</dbReference>
<dbReference type="Gene3D" id="3.40.640.10">
    <property type="entry name" value="Type I PLP-dependent aspartate aminotransferase-like (Major domain)"/>
    <property type="match status" value="1"/>
</dbReference>
<dbReference type="InterPro" id="IPR010107">
    <property type="entry name" value="Glutamate_decarboxylase"/>
</dbReference>
<dbReference type="InterPro" id="IPR002129">
    <property type="entry name" value="PyrdxlP-dep_de-COase"/>
</dbReference>
<dbReference type="InterPro" id="IPR015424">
    <property type="entry name" value="PyrdxlP-dep_Trfase"/>
</dbReference>
<dbReference type="InterPro" id="IPR015421">
    <property type="entry name" value="PyrdxlP-dep_Trfase_major"/>
</dbReference>
<dbReference type="InterPro" id="IPR021115">
    <property type="entry name" value="Pyridoxal-P_BS"/>
</dbReference>
<dbReference type="NCBIfam" id="TIGR01788">
    <property type="entry name" value="Glu-decarb-GAD"/>
    <property type="match status" value="1"/>
</dbReference>
<dbReference type="PANTHER" id="PTHR43321">
    <property type="entry name" value="GLUTAMATE DECARBOXYLASE"/>
    <property type="match status" value="1"/>
</dbReference>
<dbReference type="PANTHER" id="PTHR43321:SF3">
    <property type="entry name" value="GLUTAMATE DECARBOXYLASE"/>
    <property type="match status" value="1"/>
</dbReference>
<dbReference type="Pfam" id="PF00282">
    <property type="entry name" value="Pyridoxal_deC"/>
    <property type="match status" value="1"/>
</dbReference>
<dbReference type="SUPFAM" id="SSF53383">
    <property type="entry name" value="PLP-dependent transferases"/>
    <property type="match status" value="1"/>
</dbReference>
<dbReference type="PROSITE" id="PS00392">
    <property type="entry name" value="DDC_GAD_HDC_YDC"/>
    <property type="match status" value="1"/>
</dbReference>